<dbReference type="EMBL" id="CP001173">
    <property type="protein sequence ID" value="ACI26847.1"/>
    <property type="molecule type" value="Genomic_DNA"/>
</dbReference>
<dbReference type="RefSeq" id="WP_000167675.1">
    <property type="nucleotide sequence ID" value="NC_011333.1"/>
</dbReference>
<dbReference type="SMR" id="B5Z684"/>
<dbReference type="GeneID" id="93236455"/>
<dbReference type="KEGG" id="hpg:HPG27_77"/>
<dbReference type="HOGENOM" id="CLU_082184_2_2_7"/>
<dbReference type="Proteomes" id="UP000001735">
    <property type="component" value="Chromosome"/>
</dbReference>
<dbReference type="GO" id="GO:0022625">
    <property type="term" value="C:cytosolic large ribosomal subunit"/>
    <property type="evidence" value="ECO:0007669"/>
    <property type="project" value="TreeGrafter"/>
</dbReference>
<dbReference type="GO" id="GO:0003729">
    <property type="term" value="F:mRNA binding"/>
    <property type="evidence" value="ECO:0007669"/>
    <property type="project" value="TreeGrafter"/>
</dbReference>
<dbReference type="GO" id="GO:0003735">
    <property type="term" value="F:structural constituent of ribosome"/>
    <property type="evidence" value="ECO:0007669"/>
    <property type="project" value="InterPro"/>
</dbReference>
<dbReference type="GO" id="GO:0017148">
    <property type="term" value="P:negative regulation of translation"/>
    <property type="evidence" value="ECO:0007669"/>
    <property type="project" value="TreeGrafter"/>
</dbReference>
<dbReference type="GO" id="GO:0006412">
    <property type="term" value="P:translation"/>
    <property type="evidence" value="ECO:0007669"/>
    <property type="project" value="UniProtKB-UniRule"/>
</dbReference>
<dbReference type="CDD" id="cd00392">
    <property type="entry name" value="Ribosomal_L13"/>
    <property type="match status" value="1"/>
</dbReference>
<dbReference type="FunFam" id="3.90.1180.10:FF:000004">
    <property type="entry name" value="50S ribosomal protein L13"/>
    <property type="match status" value="1"/>
</dbReference>
<dbReference type="Gene3D" id="3.90.1180.10">
    <property type="entry name" value="Ribosomal protein L13"/>
    <property type="match status" value="1"/>
</dbReference>
<dbReference type="HAMAP" id="MF_01366">
    <property type="entry name" value="Ribosomal_uL13"/>
    <property type="match status" value="1"/>
</dbReference>
<dbReference type="InterPro" id="IPR005822">
    <property type="entry name" value="Ribosomal_uL13"/>
</dbReference>
<dbReference type="InterPro" id="IPR005823">
    <property type="entry name" value="Ribosomal_uL13_bac-type"/>
</dbReference>
<dbReference type="InterPro" id="IPR023563">
    <property type="entry name" value="Ribosomal_uL13_CS"/>
</dbReference>
<dbReference type="InterPro" id="IPR036899">
    <property type="entry name" value="Ribosomal_uL13_sf"/>
</dbReference>
<dbReference type="NCBIfam" id="TIGR01066">
    <property type="entry name" value="rplM_bact"/>
    <property type="match status" value="1"/>
</dbReference>
<dbReference type="PANTHER" id="PTHR11545:SF2">
    <property type="entry name" value="LARGE RIBOSOMAL SUBUNIT PROTEIN UL13M"/>
    <property type="match status" value="1"/>
</dbReference>
<dbReference type="PANTHER" id="PTHR11545">
    <property type="entry name" value="RIBOSOMAL PROTEIN L13"/>
    <property type="match status" value="1"/>
</dbReference>
<dbReference type="Pfam" id="PF00572">
    <property type="entry name" value="Ribosomal_L13"/>
    <property type="match status" value="1"/>
</dbReference>
<dbReference type="PIRSF" id="PIRSF002181">
    <property type="entry name" value="Ribosomal_L13"/>
    <property type="match status" value="1"/>
</dbReference>
<dbReference type="SUPFAM" id="SSF52161">
    <property type="entry name" value="Ribosomal protein L13"/>
    <property type="match status" value="1"/>
</dbReference>
<dbReference type="PROSITE" id="PS00783">
    <property type="entry name" value="RIBOSOMAL_L13"/>
    <property type="match status" value="1"/>
</dbReference>
<proteinExistence type="inferred from homology"/>
<sequence length="141" mass="16142">MTKTAKVNDIVRDWVVLDAKDKVFGRLITEIAVLLRGKHRPFYTPNVDCGDFVVVINANKVKFSGMKLEDKEYFTHSGYFGSTKSKTLQEMLEKTPEKLYHLAVRGMLPKTKLGKAMIKKLKVYRDDKHPHTAQTSKKDAK</sequence>
<organism>
    <name type="scientific">Helicobacter pylori (strain G27)</name>
    <dbReference type="NCBI Taxonomy" id="563041"/>
    <lineage>
        <taxon>Bacteria</taxon>
        <taxon>Pseudomonadati</taxon>
        <taxon>Campylobacterota</taxon>
        <taxon>Epsilonproteobacteria</taxon>
        <taxon>Campylobacterales</taxon>
        <taxon>Helicobacteraceae</taxon>
        <taxon>Helicobacter</taxon>
    </lineage>
</organism>
<keyword id="KW-1185">Reference proteome</keyword>
<keyword id="KW-0687">Ribonucleoprotein</keyword>
<keyword id="KW-0689">Ribosomal protein</keyword>
<evidence type="ECO:0000255" key="1">
    <source>
        <dbReference type="HAMAP-Rule" id="MF_01366"/>
    </source>
</evidence>
<evidence type="ECO:0000305" key="2"/>
<reference key="1">
    <citation type="journal article" date="2009" name="J. Bacteriol.">
        <title>The complete genome sequence of Helicobacter pylori strain G27.</title>
        <authorList>
            <person name="Baltrus D.A."/>
            <person name="Amieva M.R."/>
            <person name="Covacci A."/>
            <person name="Lowe T.M."/>
            <person name="Merrell D.S."/>
            <person name="Ottemann K.M."/>
            <person name="Stein M."/>
            <person name="Salama N.R."/>
            <person name="Guillemin K."/>
        </authorList>
    </citation>
    <scope>NUCLEOTIDE SEQUENCE [LARGE SCALE GENOMIC DNA]</scope>
    <source>
        <strain>G27</strain>
    </source>
</reference>
<gene>
    <name evidence="1" type="primary">rplM</name>
    <name type="ordered locus">HPG27_77</name>
</gene>
<protein>
    <recommendedName>
        <fullName evidence="1">Large ribosomal subunit protein uL13</fullName>
    </recommendedName>
    <alternativeName>
        <fullName evidence="2">50S ribosomal protein L13</fullName>
    </alternativeName>
</protein>
<accession>B5Z684</accession>
<comment type="function">
    <text evidence="1">This protein is one of the early assembly proteins of the 50S ribosomal subunit, although it is not seen to bind rRNA by itself. It is important during the early stages of 50S assembly.</text>
</comment>
<comment type="subunit">
    <text evidence="1">Part of the 50S ribosomal subunit.</text>
</comment>
<comment type="similarity">
    <text evidence="1">Belongs to the universal ribosomal protein uL13 family.</text>
</comment>
<feature type="chain" id="PRO_1000144138" description="Large ribosomal subunit protein uL13">
    <location>
        <begin position="1"/>
        <end position="141"/>
    </location>
</feature>
<name>RL13_HELPG</name>